<reference key="1">
    <citation type="journal article" date="2009" name="PLoS Genet.">
        <title>The complete genome and proteome of Laribacter hongkongensis reveal potential mechanisms for adaptations to different temperatures and habitats.</title>
        <authorList>
            <person name="Woo P.C.Y."/>
            <person name="Lau S.K.P."/>
            <person name="Tse H."/>
            <person name="Teng J.L.L."/>
            <person name="Curreem S.O."/>
            <person name="Tsang A.K.L."/>
            <person name="Fan R.Y.Y."/>
            <person name="Wong G.K.M."/>
            <person name="Huang Y."/>
            <person name="Loman N.J."/>
            <person name="Snyder L.A.S."/>
            <person name="Cai J.J."/>
            <person name="Huang J.-D."/>
            <person name="Mak W."/>
            <person name="Pallen M.J."/>
            <person name="Lok S."/>
            <person name="Yuen K.-Y."/>
        </authorList>
    </citation>
    <scope>NUCLEOTIDE SEQUENCE [LARGE SCALE GENOMIC DNA]</scope>
    <source>
        <strain>HLHK9</strain>
    </source>
</reference>
<sequence>MARQLFKRRKFCRFTAEGIKEVDYKAVDLLKDFIAENGKIIPARITGTKARYQRQLSTAIKRARFLALMPYTDQH</sequence>
<evidence type="ECO:0000255" key="1">
    <source>
        <dbReference type="HAMAP-Rule" id="MF_00270"/>
    </source>
</evidence>
<evidence type="ECO:0000305" key="2"/>
<gene>
    <name evidence="1" type="primary">rpsR</name>
    <name type="ordered locus">LHK_02700</name>
</gene>
<feature type="chain" id="PRO_1000196518" description="Small ribosomal subunit protein bS18">
    <location>
        <begin position="1"/>
        <end position="75"/>
    </location>
</feature>
<organism>
    <name type="scientific">Laribacter hongkongensis (strain HLHK9)</name>
    <dbReference type="NCBI Taxonomy" id="557598"/>
    <lineage>
        <taxon>Bacteria</taxon>
        <taxon>Pseudomonadati</taxon>
        <taxon>Pseudomonadota</taxon>
        <taxon>Betaproteobacteria</taxon>
        <taxon>Neisseriales</taxon>
        <taxon>Aquaspirillaceae</taxon>
        <taxon>Laribacter</taxon>
    </lineage>
</organism>
<accession>C1DCR2</accession>
<protein>
    <recommendedName>
        <fullName evidence="1">Small ribosomal subunit protein bS18</fullName>
    </recommendedName>
    <alternativeName>
        <fullName evidence="2">30S ribosomal protein S18</fullName>
    </alternativeName>
</protein>
<keyword id="KW-1185">Reference proteome</keyword>
<keyword id="KW-0687">Ribonucleoprotein</keyword>
<keyword id="KW-0689">Ribosomal protein</keyword>
<keyword id="KW-0694">RNA-binding</keyword>
<keyword id="KW-0699">rRNA-binding</keyword>
<comment type="function">
    <text evidence="1">Binds as a heterodimer with protein bS6 to the central domain of the 16S rRNA, where it helps stabilize the platform of the 30S subunit.</text>
</comment>
<comment type="subunit">
    <text evidence="1">Part of the 30S ribosomal subunit. Forms a tight heterodimer with protein bS6.</text>
</comment>
<comment type="similarity">
    <text evidence="1">Belongs to the bacterial ribosomal protein bS18 family.</text>
</comment>
<name>RS18_LARHH</name>
<dbReference type="EMBL" id="CP001154">
    <property type="protein sequence ID" value="ACO75681.1"/>
    <property type="molecule type" value="Genomic_DNA"/>
</dbReference>
<dbReference type="RefSeq" id="WP_012698145.1">
    <property type="nucleotide sequence ID" value="NC_012559.1"/>
</dbReference>
<dbReference type="SMR" id="C1DCR2"/>
<dbReference type="STRING" id="557598.LHK_02700"/>
<dbReference type="GeneID" id="75110380"/>
<dbReference type="KEGG" id="lhk:LHK_02700"/>
<dbReference type="eggNOG" id="COG0238">
    <property type="taxonomic scope" value="Bacteria"/>
</dbReference>
<dbReference type="HOGENOM" id="CLU_148710_2_2_4"/>
<dbReference type="Proteomes" id="UP000002010">
    <property type="component" value="Chromosome"/>
</dbReference>
<dbReference type="GO" id="GO:0022627">
    <property type="term" value="C:cytosolic small ribosomal subunit"/>
    <property type="evidence" value="ECO:0007669"/>
    <property type="project" value="TreeGrafter"/>
</dbReference>
<dbReference type="GO" id="GO:0070181">
    <property type="term" value="F:small ribosomal subunit rRNA binding"/>
    <property type="evidence" value="ECO:0007669"/>
    <property type="project" value="TreeGrafter"/>
</dbReference>
<dbReference type="GO" id="GO:0003735">
    <property type="term" value="F:structural constituent of ribosome"/>
    <property type="evidence" value="ECO:0007669"/>
    <property type="project" value="InterPro"/>
</dbReference>
<dbReference type="GO" id="GO:0006412">
    <property type="term" value="P:translation"/>
    <property type="evidence" value="ECO:0007669"/>
    <property type="project" value="UniProtKB-UniRule"/>
</dbReference>
<dbReference type="FunFam" id="4.10.640.10:FF:000001">
    <property type="entry name" value="30S ribosomal protein S18"/>
    <property type="match status" value="1"/>
</dbReference>
<dbReference type="Gene3D" id="4.10.640.10">
    <property type="entry name" value="Ribosomal protein S18"/>
    <property type="match status" value="1"/>
</dbReference>
<dbReference type="HAMAP" id="MF_00270">
    <property type="entry name" value="Ribosomal_bS18"/>
    <property type="match status" value="1"/>
</dbReference>
<dbReference type="InterPro" id="IPR001648">
    <property type="entry name" value="Ribosomal_bS18"/>
</dbReference>
<dbReference type="InterPro" id="IPR036870">
    <property type="entry name" value="Ribosomal_bS18_sf"/>
</dbReference>
<dbReference type="NCBIfam" id="TIGR00165">
    <property type="entry name" value="S18"/>
    <property type="match status" value="1"/>
</dbReference>
<dbReference type="PANTHER" id="PTHR13479">
    <property type="entry name" value="30S RIBOSOMAL PROTEIN S18"/>
    <property type="match status" value="1"/>
</dbReference>
<dbReference type="PANTHER" id="PTHR13479:SF40">
    <property type="entry name" value="SMALL RIBOSOMAL SUBUNIT PROTEIN BS18M"/>
    <property type="match status" value="1"/>
</dbReference>
<dbReference type="Pfam" id="PF01084">
    <property type="entry name" value="Ribosomal_S18"/>
    <property type="match status" value="1"/>
</dbReference>
<dbReference type="PRINTS" id="PR00974">
    <property type="entry name" value="RIBOSOMALS18"/>
</dbReference>
<dbReference type="SUPFAM" id="SSF46911">
    <property type="entry name" value="Ribosomal protein S18"/>
    <property type="match status" value="1"/>
</dbReference>
<proteinExistence type="inferred from homology"/>